<name>RL21_METAR</name>
<proteinExistence type="inferred from homology"/>
<keyword id="KW-1185">Reference proteome</keyword>
<keyword id="KW-0687">Ribonucleoprotein</keyword>
<keyword id="KW-0689">Ribosomal protein</keyword>
<evidence type="ECO:0000255" key="1">
    <source>
        <dbReference type="HAMAP-Rule" id="MF_00369"/>
    </source>
</evidence>
<evidence type="ECO:0000305" key="2"/>
<accession>Q0W2E9</accession>
<organism>
    <name type="scientific">Methanocella arvoryzae (strain DSM 22066 / NBRC 105507 / MRE50)</name>
    <dbReference type="NCBI Taxonomy" id="351160"/>
    <lineage>
        <taxon>Archaea</taxon>
        <taxon>Methanobacteriati</taxon>
        <taxon>Methanobacteriota</taxon>
        <taxon>Stenosarchaea group</taxon>
        <taxon>Methanomicrobia</taxon>
        <taxon>Methanocellales</taxon>
        <taxon>Methanocellaceae</taxon>
        <taxon>Methanocella</taxon>
    </lineage>
</organism>
<gene>
    <name evidence="1" type="primary">rpl21e</name>
    <name type="ordered locus">UNCMA_08080</name>
    <name type="ORF">RCIX2349</name>
</gene>
<dbReference type="EMBL" id="AM114193">
    <property type="protein sequence ID" value="CAJ37444.1"/>
    <property type="molecule type" value="Genomic_DNA"/>
</dbReference>
<dbReference type="RefSeq" id="WP_012035137.1">
    <property type="nucleotide sequence ID" value="NC_009464.1"/>
</dbReference>
<dbReference type="SMR" id="Q0W2E9"/>
<dbReference type="STRING" id="351160.RCIX2349"/>
<dbReference type="GeneID" id="5144638"/>
<dbReference type="KEGG" id="rci:RCIX2349"/>
<dbReference type="PATRIC" id="fig|351160.9.peg.837"/>
<dbReference type="eggNOG" id="arCOG04129">
    <property type="taxonomic scope" value="Archaea"/>
</dbReference>
<dbReference type="OrthoDB" id="6295at2157"/>
<dbReference type="Proteomes" id="UP000000663">
    <property type="component" value="Chromosome"/>
</dbReference>
<dbReference type="GO" id="GO:1990904">
    <property type="term" value="C:ribonucleoprotein complex"/>
    <property type="evidence" value="ECO:0007669"/>
    <property type="project" value="UniProtKB-KW"/>
</dbReference>
<dbReference type="GO" id="GO:0005840">
    <property type="term" value="C:ribosome"/>
    <property type="evidence" value="ECO:0007669"/>
    <property type="project" value="UniProtKB-KW"/>
</dbReference>
<dbReference type="GO" id="GO:0003735">
    <property type="term" value="F:structural constituent of ribosome"/>
    <property type="evidence" value="ECO:0007669"/>
    <property type="project" value="InterPro"/>
</dbReference>
<dbReference type="GO" id="GO:0006412">
    <property type="term" value="P:translation"/>
    <property type="evidence" value="ECO:0007669"/>
    <property type="project" value="UniProtKB-UniRule"/>
</dbReference>
<dbReference type="FunFam" id="2.30.30.70:FF:000001">
    <property type="entry name" value="60S ribosomal protein L21"/>
    <property type="match status" value="1"/>
</dbReference>
<dbReference type="Gene3D" id="2.30.30.70">
    <property type="entry name" value="Ribosomal protein L21"/>
    <property type="match status" value="1"/>
</dbReference>
<dbReference type="HAMAP" id="MF_00369">
    <property type="entry name" value="Ribosomal_eL21"/>
    <property type="match status" value="1"/>
</dbReference>
<dbReference type="InterPro" id="IPR001147">
    <property type="entry name" value="Ribosomal_eL21"/>
</dbReference>
<dbReference type="InterPro" id="IPR022856">
    <property type="entry name" value="Ribosomal_eL21_arc"/>
</dbReference>
<dbReference type="InterPro" id="IPR018259">
    <property type="entry name" value="Ribosomal_eL21_CS"/>
</dbReference>
<dbReference type="InterPro" id="IPR036948">
    <property type="entry name" value="Ribosomal_eL21_sf"/>
</dbReference>
<dbReference type="InterPro" id="IPR008991">
    <property type="entry name" value="Translation_prot_SH3-like_sf"/>
</dbReference>
<dbReference type="NCBIfam" id="NF003303">
    <property type="entry name" value="PRK04306.1"/>
    <property type="match status" value="1"/>
</dbReference>
<dbReference type="PANTHER" id="PTHR20981">
    <property type="entry name" value="60S RIBOSOMAL PROTEIN L21"/>
    <property type="match status" value="1"/>
</dbReference>
<dbReference type="Pfam" id="PF01157">
    <property type="entry name" value="Ribosomal_L21e"/>
    <property type="match status" value="1"/>
</dbReference>
<dbReference type="SUPFAM" id="SSF50104">
    <property type="entry name" value="Translation proteins SH3-like domain"/>
    <property type="match status" value="1"/>
</dbReference>
<dbReference type="PROSITE" id="PS01171">
    <property type="entry name" value="RIBOSOMAL_L21E"/>
    <property type="match status" value="1"/>
</dbReference>
<protein>
    <recommendedName>
        <fullName evidence="1">Large ribosomal subunit protein eL21</fullName>
    </recommendedName>
    <alternativeName>
        <fullName evidence="2">50S ribosomal protein L21e</fullName>
    </alternativeName>
</protein>
<reference key="1">
    <citation type="journal article" date="2006" name="Science">
        <title>Genome of rice cluster I archaea -- the key methane producers in the rice rhizosphere.</title>
        <authorList>
            <person name="Erkel C."/>
            <person name="Kube M."/>
            <person name="Reinhardt R."/>
            <person name="Liesack W."/>
        </authorList>
    </citation>
    <scope>NUCLEOTIDE SEQUENCE [LARGE SCALE GENOMIC DNA]</scope>
    <source>
        <strain>DSM 22066 / NBRC 105507 / MRE50</strain>
    </source>
</reference>
<comment type="similarity">
    <text evidence="1">Belongs to the eukaryotic ribosomal protein eL21 family.</text>
</comment>
<feature type="chain" id="PRO_1000007131" description="Large ribosomal subunit protein eL21">
    <location>
        <begin position="1"/>
        <end position="99"/>
    </location>
</feature>
<sequence length="99" mass="11059">MARSHGERLKTRHKFNKDLRARGLSPVSKAVQEFEVGQKVHIDIDPSVHKGMPYRRFQGLTGEILGQAGRAWFVGISDGGKKKTVIARSQHLKPQKNSA</sequence>